<sequence>MPKAFQTIGLIGKPNHHGTNLTLKRLHHWLTMQGFEILVEERVAAEMGPKCNSVDLLELGDRCDLAIVVGGDGNMLGAARVLARFDIGVIGVNRGNLGFLTDLPPDSFEAALGDVLEGKFETEFRFLLETEVHRHGNMKSSNTAVNEAVLHPGKVAHMIEFEVYIDNNFMYSQRADGMIVSTPTGSTAYSLSAGGAILTPNLEALILVPMFPHTLSSRPIVVDACSIIKLVVSPENGDNLEVSCDGHVMLPVLPGDEIIIKRSHERLRLIHPKGHNYFHVLRNKLGWGSKLF</sequence>
<name>NADK_SHEWM</name>
<proteinExistence type="inferred from homology"/>
<protein>
    <recommendedName>
        <fullName evidence="1">NAD kinase</fullName>
        <ecNumber evidence="1">2.7.1.23</ecNumber>
    </recommendedName>
    <alternativeName>
        <fullName evidence="1">ATP-dependent NAD kinase</fullName>
    </alternativeName>
</protein>
<gene>
    <name evidence="1" type="primary">nadK</name>
    <name type="ordered locus">Swoo_3480</name>
</gene>
<dbReference type="EC" id="2.7.1.23" evidence="1"/>
<dbReference type="EMBL" id="CP000961">
    <property type="protein sequence ID" value="ACA87746.1"/>
    <property type="molecule type" value="Genomic_DNA"/>
</dbReference>
<dbReference type="RefSeq" id="WP_012326080.1">
    <property type="nucleotide sequence ID" value="NC_010506.1"/>
</dbReference>
<dbReference type="SMR" id="B1KQZ0"/>
<dbReference type="STRING" id="392500.Swoo_3480"/>
<dbReference type="KEGG" id="swd:Swoo_3480"/>
<dbReference type="eggNOG" id="COG0061">
    <property type="taxonomic scope" value="Bacteria"/>
</dbReference>
<dbReference type="HOGENOM" id="CLU_008831_0_1_6"/>
<dbReference type="Proteomes" id="UP000002168">
    <property type="component" value="Chromosome"/>
</dbReference>
<dbReference type="GO" id="GO:0005737">
    <property type="term" value="C:cytoplasm"/>
    <property type="evidence" value="ECO:0007669"/>
    <property type="project" value="UniProtKB-SubCell"/>
</dbReference>
<dbReference type="GO" id="GO:0005524">
    <property type="term" value="F:ATP binding"/>
    <property type="evidence" value="ECO:0007669"/>
    <property type="project" value="UniProtKB-KW"/>
</dbReference>
<dbReference type="GO" id="GO:0046872">
    <property type="term" value="F:metal ion binding"/>
    <property type="evidence" value="ECO:0007669"/>
    <property type="project" value="UniProtKB-UniRule"/>
</dbReference>
<dbReference type="GO" id="GO:0051287">
    <property type="term" value="F:NAD binding"/>
    <property type="evidence" value="ECO:0007669"/>
    <property type="project" value="UniProtKB-ARBA"/>
</dbReference>
<dbReference type="GO" id="GO:0003951">
    <property type="term" value="F:NAD+ kinase activity"/>
    <property type="evidence" value="ECO:0007669"/>
    <property type="project" value="UniProtKB-UniRule"/>
</dbReference>
<dbReference type="GO" id="GO:0019674">
    <property type="term" value="P:NAD metabolic process"/>
    <property type="evidence" value="ECO:0007669"/>
    <property type="project" value="InterPro"/>
</dbReference>
<dbReference type="GO" id="GO:0006741">
    <property type="term" value="P:NADP biosynthetic process"/>
    <property type="evidence" value="ECO:0007669"/>
    <property type="project" value="UniProtKB-UniRule"/>
</dbReference>
<dbReference type="FunFam" id="2.60.200.30:FF:000001">
    <property type="entry name" value="NAD kinase"/>
    <property type="match status" value="1"/>
</dbReference>
<dbReference type="Gene3D" id="3.40.50.10330">
    <property type="entry name" value="Probable inorganic polyphosphate/atp-NAD kinase, domain 1"/>
    <property type="match status" value="1"/>
</dbReference>
<dbReference type="Gene3D" id="2.60.200.30">
    <property type="entry name" value="Probable inorganic polyphosphate/atp-NAD kinase, domain 2"/>
    <property type="match status" value="1"/>
</dbReference>
<dbReference type="HAMAP" id="MF_00361">
    <property type="entry name" value="NAD_kinase"/>
    <property type="match status" value="1"/>
</dbReference>
<dbReference type="InterPro" id="IPR017438">
    <property type="entry name" value="ATP-NAD_kinase_N"/>
</dbReference>
<dbReference type="InterPro" id="IPR017437">
    <property type="entry name" value="ATP-NAD_kinase_PpnK-typ_C"/>
</dbReference>
<dbReference type="InterPro" id="IPR016064">
    <property type="entry name" value="NAD/diacylglycerol_kinase_sf"/>
</dbReference>
<dbReference type="InterPro" id="IPR002504">
    <property type="entry name" value="NADK"/>
</dbReference>
<dbReference type="NCBIfam" id="NF002306">
    <property type="entry name" value="PRK01231.1"/>
    <property type="match status" value="1"/>
</dbReference>
<dbReference type="NCBIfam" id="NF002893">
    <property type="entry name" value="PRK03378.1"/>
    <property type="match status" value="1"/>
</dbReference>
<dbReference type="PANTHER" id="PTHR20275">
    <property type="entry name" value="NAD KINASE"/>
    <property type="match status" value="1"/>
</dbReference>
<dbReference type="PANTHER" id="PTHR20275:SF0">
    <property type="entry name" value="NAD KINASE"/>
    <property type="match status" value="1"/>
</dbReference>
<dbReference type="Pfam" id="PF01513">
    <property type="entry name" value="NAD_kinase"/>
    <property type="match status" value="1"/>
</dbReference>
<dbReference type="Pfam" id="PF20143">
    <property type="entry name" value="NAD_kinase_C"/>
    <property type="match status" value="1"/>
</dbReference>
<dbReference type="SUPFAM" id="SSF111331">
    <property type="entry name" value="NAD kinase/diacylglycerol kinase-like"/>
    <property type="match status" value="1"/>
</dbReference>
<reference key="1">
    <citation type="submission" date="2008-02" db="EMBL/GenBank/DDBJ databases">
        <title>Complete sequence of Shewanella woodyi ATCC 51908.</title>
        <authorList>
            <consortium name="US DOE Joint Genome Institute"/>
            <person name="Copeland A."/>
            <person name="Lucas S."/>
            <person name="Lapidus A."/>
            <person name="Glavina del Rio T."/>
            <person name="Dalin E."/>
            <person name="Tice H."/>
            <person name="Bruce D."/>
            <person name="Goodwin L."/>
            <person name="Pitluck S."/>
            <person name="Sims D."/>
            <person name="Brettin T."/>
            <person name="Detter J.C."/>
            <person name="Han C."/>
            <person name="Kuske C.R."/>
            <person name="Schmutz J."/>
            <person name="Larimer F."/>
            <person name="Land M."/>
            <person name="Hauser L."/>
            <person name="Kyrpides N."/>
            <person name="Lykidis A."/>
            <person name="Zhao J.-S."/>
            <person name="Richardson P."/>
        </authorList>
    </citation>
    <scope>NUCLEOTIDE SEQUENCE [LARGE SCALE GENOMIC DNA]</scope>
    <source>
        <strain>ATCC 51908 / MS32</strain>
    </source>
</reference>
<accession>B1KQZ0</accession>
<comment type="function">
    <text evidence="1">Involved in the regulation of the intracellular balance of NAD and NADP, and is a key enzyme in the biosynthesis of NADP. Catalyzes specifically the phosphorylation on 2'-hydroxyl of the adenosine moiety of NAD to yield NADP.</text>
</comment>
<comment type="catalytic activity">
    <reaction evidence="1">
        <text>NAD(+) + ATP = ADP + NADP(+) + H(+)</text>
        <dbReference type="Rhea" id="RHEA:18629"/>
        <dbReference type="ChEBI" id="CHEBI:15378"/>
        <dbReference type="ChEBI" id="CHEBI:30616"/>
        <dbReference type="ChEBI" id="CHEBI:57540"/>
        <dbReference type="ChEBI" id="CHEBI:58349"/>
        <dbReference type="ChEBI" id="CHEBI:456216"/>
        <dbReference type="EC" id="2.7.1.23"/>
    </reaction>
</comment>
<comment type="cofactor">
    <cofactor evidence="1">
        <name>a divalent metal cation</name>
        <dbReference type="ChEBI" id="CHEBI:60240"/>
    </cofactor>
</comment>
<comment type="subcellular location">
    <subcellularLocation>
        <location evidence="1">Cytoplasm</location>
    </subcellularLocation>
</comment>
<comment type="similarity">
    <text evidence="1">Belongs to the NAD kinase family.</text>
</comment>
<keyword id="KW-0067">ATP-binding</keyword>
<keyword id="KW-0963">Cytoplasm</keyword>
<keyword id="KW-0418">Kinase</keyword>
<keyword id="KW-0520">NAD</keyword>
<keyword id="KW-0521">NADP</keyword>
<keyword id="KW-0547">Nucleotide-binding</keyword>
<keyword id="KW-1185">Reference proteome</keyword>
<keyword id="KW-0808">Transferase</keyword>
<evidence type="ECO:0000255" key="1">
    <source>
        <dbReference type="HAMAP-Rule" id="MF_00361"/>
    </source>
</evidence>
<organism>
    <name type="scientific">Shewanella woodyi (strain ATCC 51908 / MS32)</name>
    <dbReference type="NCBI Taxonomy" id="392500"/>
    <lineage>
        <taxon>Bacteria</taxon>
        <taxon>Pseudomonadati</taxon>
        <taxon>Pseudomonadota</taxon>
        <taxon>Gammaproteobacteria</taxon>
        <taxon>Alteromonadales</taxon>
        <taxon>Shewanellaceae</taxon>
        <taxon>Shewanella</taxon>
    </lineage>
</organism>
<feature type="chain" id="PRO_1000192518" description="NAD kinase">
    <location>
        <begin position="1"/>
        <end position="292"/>
    </location>
</feature>
<feature type="active site" description="Proton acceptor" evidence="1">
    <location>
        <position position="72"/>
    </location>
</feature>
<feature type="binding site" evidence="1">
    <location>
        <begin position="72"/>
        <end position="73"/>
    </location>
    <ligand>
        <name>NAD(+)</name>
        <dbReference type="ChEBI" id="CHEBI:57540"/>
    </ligand>
</feature>
<feature type="binding site" evidence="1">
    <location>
        <begin position="146"/>
        <end position="147"/>
    </location>
    <ligand>
        <name>NAD(+)</name>
        <dbReference type="ChEBI" id="CHEBI:57540"/>
    </ligand>
</feature>
<feature type="binding site" evidence="1">
    <location>
        <position position="157"/>
    </location>
    <ligand>
        <name>NAD(+)</name>
        <dbReference type="ChEBI" id="CHEBI:57540"/>
    </ligand>
</feature>
<feature type="binding site" evidence="1">
    <location>
        <position position="174"/>
    </location>
    <ligand>
        <name>NAD(+)</name>
        <dbReference type="ChEBI" id="CHEBI:57540"/>
    </ligand>
</feature>
<feature type="binding site" evidence="1">
    <location>
        <position position="176"/>
    </location>
    <ligand>
        <name>NAD(+)</name>
        <dbReference type="ChEBI" id="CHEBI:57540"/>
    </ligand>
</feature>
<feature type="binding site" evidence="1">
    <location>
        <begin position="187"/>
        <end position="192"/>
    </location>
    <ligand>
        <name>NAD(+)</name>
        <dbReference type="ChEBI" id="CHEBI:57540"/>
    </ligand>
</feature>